<sequence>MAVDVKSRAKRYEKLDFLGEGQFATVYKARDKNTNQIVAIKKIKLGHRSEAKDGINRTALREIKLLQELSHPNIIGLLDAFGHKSNISLVFDFMETDLEVIIKDNSLVLTPSHIKAYMLMTLQGLEYLHQHWILHRDLKPNNLLLDENGVLKLADFGLAKSFGSPNRAYTHQVVTRWYRAPELLFGARMYGVGVDMWAVGCILAELLLRVPFLPGDSDLDQLTRIFETLGTPTEEQWPDMCSLPDYVTFKSFPGVPLQHIFIAAGDDLLELIQGLFLFNPCTRTTASQALKTKYFSNRPGPTPGCQLPRPNCPVEALKEPANPTVATKRKRAEALEQGILPKKLIF</sequence>
<evidence type="ECO:0000250" key="1"/>
<evidence type="ECO:0000250" key="2">
    <source>
        <dbReference type="UniProtKB" id="P50613"/>
    </source>
</evidence>
<evidence type="ECO:0000255" key="3">
    <source>
        <dbReference type="PROSITE-ProRule" id="PRU00159"/>
    </source>
</evidence>
<evidence type="ECO:0000255" key="4">
    <source>
        <dbReference type="PROSITE-ProRule" id="PRU10027"/>
    </source>
</evidence>
<evidence type="ECO:0000305" key="5"/>
<gene>
    <name type="primary">Cdk7</name>
    <name type="synonym">Cak</name>
    <name type="synonym">Cdkn7</name>
    <name type="synonym">Crk4</name>
    <name type="synonym">Mo15</name>
    <name type="synonym">Mpk-7</name>
</gene>
<protein>
    <recommendedName>
        <fullName>Cyclin-dependent kinase 7</fullName>
        <ecNumber>2.7.11.22</ecNumber>
        <ecNumber>2.7.11.23</ecNumber>
    </recommendedName>
    <alternativeName>
        <fullName>39 kDa protein kinase</fullName>
        <shortName>P39 Mo15</shortName>
    </alternativeName>
    <alternativeName>
        <fullName>CDK-activating kinase</fullName>
    </alternativeName>
    <alternativeName>
        <fullName>CR4 protein kinase</fullName>
        <shortName>CRK4</shortName>
    </alternativeName>
    <alternativeName>
        <fullName>Cell division protein kinase 7</fullName>
    </alternativeName>
    <alternativeName>
        <fullName>Protein-tyrosine kinase MPK-7</fullName>
    </alternativeName>
    <alternativeName>
        <fullName>TFIIH basal transcription factor complex kinase subunit</fullName>
    </alternativeName>
</protein>
<feature type="initiator methionine" description="Removed" evidence="2">
    <location>
        <position position="1"/>
    </location>
</feature>
<feature type="chain" id="PRO_0000085792" description="Cyclin-dependent kinase 7">
    <location>
        <begin position="2"/>
        <end position="346"/>
    </location>
</feature>
<feature type="domain" description="Protein kinase" evidence="3">
    <location>
        <begin position="12"/>
        <end position="295"/>
    </location>
</feature>
<feature type="active site" description="Proton acceptor" evidence="3 4">
    <location>
        <position position="137"/>
    </location>
</feature>
<feature type="binding site" evidence="3">
    <location>
        <begin position="18"/>
        <end position="26"/>
    </location>
    <ligand>
        <name>ATP</name>
        <dbReference type="ChEBI" id="CHEBI:30616"/>
    </ligand>
</feature>
<feature type="binding site" evidence="3">
    <location>
        <position position="41"/>
    </location>
    <ligand>
        <name>ATP</name>
        <dbReference type="ChEBI" id="CHEBI:30616"/>
    </ligand>
</feature>
<feature type="modified residue" description="N-acetylalanine" evidence="2">
    <location>
        <position position="2"/>
    </location>
</feature>
<feature type="modified residue" description="Phosphoserine" evidence="2">
    <location>
        <position position="7"/>
    </location>
</feature>
<feature type="modified residue" description="Phosphoserine; by CDK1 and CDK2" evidence="2">
    <location>
        <position position="164"/>
    </location>
</feature>
<feature type="modified residue" description="Phosphothreonine; by CDK2" evidence="2">
    <location>
        <position position="170"/>
    </location>
</feature>
<feature type="sequence conflict" description="In Ref. 2; CAA52242." evidence="5" ref="2">
    <original>RY</original>
    <variation>HN</variation>
    <location>
        <begin position="11"/>
        <end position="12"/>
    </location>
</feature>
<feature type="sequence conflict" description="In Ref. 2; CAA52242." evidence="5" ref="2">
    <original>E</original>
    <variation>R</variation>
    <location>
        <position position="20"/>
    </location>
</feature>
<feature type="sequence conflict" description="In Ref. 3; AAH04605." evidence="5" ref="3">
    <location>
        <begin position="100"/>
        <end position="136"/>
    </location>
</feature>
<feature type="sequence conflict" description="In Ref. 2; CAA52242." evidence="5" ref="2">
    <original>V</original>
    <variation>L</variation>
    <location>
        <position position="100"/>
    </location>
</feature>
<feature type="sequence conflict" description="In Ref. 2; CAA52242." evidence="5" ref="2">
    <original>D</original>
    <variation>H</variation>
    <location>
        <position position="104"/>
    </location>
</feature>
<feature type="sequence conflict" description="In Ref. 2; CAA52242." evidence="5" ref="2">
    <original>QH</original>
    <variation>HN</variation>
    <location>
        <begin position="130"/>
        <end position="131"/>
    </location>
</feature>
<name>CDK7_MOUSE</name>
<comment type="function">
    <text evidence="2">Serine/threonine kinase involved in cell cycle control and in RNA polymerase II-mediated RNA transcription. Cyclin-dependent kinases (CDKs) are activated by the binding to a cyclin and mediate the progression through the cell cycle. Each different complex controls a specific transition between 2 subsequent phases in the cell cycle. Required for both activation and complex formation of CDK1/cyclin-B during G2-M transition, and for activation of CDK2/cyclins during G1-S transition (but not complex formation). CDK7 is the catalytic subunit of the CDK-activating kinase (CAK) complex. Phosphorylates SPT5/SUPT5H, SF1/NR5A1, POLR2A, p53/TP53, CDK1, CDK2, CDK4, CDK6 and CDK11B/CDK11. Initiates transcription by RNA polymerase II by mediating phosphorylation of POLR2A at 'Ser-5' of the repetitive C-terminal domain (CTD) when POLR2A is in complex with DNA, promoting dissociation from DNA and initiation. CAK activates the cyclin-associated kinases CDK1, CDK2, CDK4 and CDK6 by threonine phosphorylation, thus regulating cell cycle progression. CAK complexed to the core-TFIIH basal transcription factor activates RNA polymerase II by serine phosphorylation of the CTD of POLR2A, allowing its escape from the promoter and elongation of the transcripts. Its expression and activity are constant throughout the cell cycle. Upon DNA damage, triggers p53/TP53 activation by phosphorylation, but is inactivated in turn by p53/TP53; this feedback loop may lead to an arrest of the cell cycle and of the transcription, helping in cell recovery, or to apoptosis. Required for DNA-bound peptides-mediated transcription and cellular growth inhibition.</text>
</comment>
<comment type="catalytic activity">
    <reaction evidence="2">
        <text>L-seryl-[protein] + ATP = O-phospho-L-seryl-[protein] + ADP + H(+)</text>
        <dbReference type="Rhea" id="RHEA:17989"/>
        <dbReference type="Rhea" id="RHEA-COMP:9863"/>
        <dbReference type="Rhea" id="RHEA-COMP:11604"/>
        <dbReference type="ChEBI" id="CHEBI:15378"/>
        <dbReference type="ChEBI" id="CHEBI:29999"/>
        <dbReference type="ChEBI" id="CHEBI:30616"/>
        <dbReference type="ChEBI" id="CHEBI:83421"/>
        <dbReference type="ChEBI" id="CHEBI:456216"/>
        <dbReference type="EC" id="2.7.11.22"/>
    </reaction>
</comment>
<comment type="catalytic activity">
    <reaction evidence="2">
        <text>L-threonyl-[protein] + ATP = O-phospho-L-threonyl-[protein] + ADP + H(+)</text>
        <dbReference type="Rhea" id="RHEA:46608"/>
        <dbReference type="Rhea" id="RHEA-COMP:11060"/>
        <dbReference type="Rhea" id="RHEA-COMP:11605"/>
        <dbReference type="ChEBI" id="CHEBI:15378"/>
        <dbReference type="ChEBI" id="CHEBI:30013"/>
        <dbReference type="ChEBI" id="CHEBI:30616"/>
        <dbReference type="ChEBI" id="CHEBI:61977"/>
        <dbReference type="ChEBI" id="CHEBI:456216"/>
        <dbReference type="EC" id="2.7.11.22"/>
    </reaction>
</comment>
<comment type="catalytic activity">
    <reaction evidence="2">
        <text>[DNA-directed RNA polymerase] + ATP = phospho-[DNA-directed RNA polymerase] + ADP + H(+)</text>
        <dbReference type="Rhea" id="RHEA:10216"/>
        <dbReference type="Rhea" id="RHEA-COMP:11321"/>
        <dbReference type="Rhea" id="RHEA-COMP:11322"/>
        <dbReference type="ChEBI" id="CHEBI:15378"/>
        <dbReference type="ChEBI" id="CHEBI:30616"/>
        <dbReference type="ChEBI" id="CHEBI:43176"/>
        <dbReference type="ChEBI" id="CHEBI:68546"/>
        <dbReference type="ChEBI" id="CHEBI:456216"/>
        <dbReference type="EC" id="2.7.11.23"/>
    </reaction>
</comment>
<comment type="activity regulation">
    <text evidence="1">Phosphorylation at Thr-170 is required for enzymatic activity. The association of p53/TP53 to the CAK complex in response to DNA damage reduces kinase activity toward CDK2 and RNA polymerase II repetitive C-terminal domain (CTD), thus stopping cell cycle progression (By similarity).</text>
</comment>
<comment type="subunit">
    <text evidence="2">Associates primarily with cyclin-H (CCNH) and MAT1 to form the CAK complex. CAK can further associate with the core-TFIIH to form the TFIIH basal transcription factor; this complex is sensitive to UV light. The CAK complex binds to p53/TP53 in response to DNA damage. Interacts with CDK2, SF1/NR5A1, PUF60 and PRKCI (By similarity). Interacts with HINT1 (By similarity).</text>
</comment>
<comment type="subcellular location">
    <subcellularLocation>
        <location evidence="2">Nucleus</location>
    </subcellularLocation>
    <subcellularLocation>
        <location evidence="2">Cytoplasm</location>
    </subcellularLocation>
    <subcellularLocation>
        <location evidence="2">Cytoplasm</location>
        <location evidence="2">Perinuclear region</location>
    </subcellularLocation>
    <text evidence="2">Colocalizes with PRKCI in the cytoplasm and nucleus. Translocates from the nucleus to cytoplasm and perinuclear region in response to DNA-bound peptides (By similarity).</text>
</comment>
<comment type="PTM">
    <text evidence="1">Phosphorylation of Ser-164 during mitosis inactivates the enzyme. Phosphorylation of Thr-170 is required for activity. Phosphorylated at Ser-164 and Thr-170 by CDK2 (By similarity).</text>
</comment>
<comment type="similarity">
    <text evidence="5">Belongs to the protein kinase superfamily. CMGC Ser/Thr protein kinase family. CDC2/CDKX subfamily.</text>
</comment>
<keyword id="KW-0007">Acetylation</keyword>
<keyword id="KW-0067">ATP-binding</keyword>
<keyword id="KW-0131">Cell cycle</keyword>
<keyword id="KW-0132">Cell division</keyword>
<keyword id="KW-0963">Cytoplasm</keyword>
<keyword id="KW-0227">DNA damage</keyword>
<keyword id="KW-0234">DNA repair</keyword>
<keyword id="KW-0418">Kinase</keyword>
<keyword id="KW-0547">Nucleotide-binding</keyword>
<keyword id="KW-0539">Nucleus</keyword>
<keyword id="KW-0597">Phosphoprotein</keyword>
<keyword id="KW-1185">Reference proteome</keyword>
<keyword id="KW-0723">Serine/threonine-protein kinase</keyword>
<keyword id="KW-0804">Transcription</keyword>
<keyword id="KW-0805">Transcription regulation</keyword>
<keyword id="KW-0808">Transferase</keyword>
<proteinExistence type="evidence at protein level"/>
<reference key="1">
    <citation type="journal article" date="1994" name="Mol. Cell. Biol.">
        <title>Activation of cyclin-dependent kinase 4 (cdk4) by mouse MO15-associated kinase.</title>
        <authorList>
            <person name="Matsuoka M."/>
            <person name="Kato J.-Y."/>
            <person name="Fisher R.P."/>
            <person name="Morgan D.O."/>
            <person name="Sherr C.J."/>
        </authorList>
    </citation>
    <scope>NUCLEOTIDE SEQUENCE [MRNA]</scope>
    <source>
        <tissue>Macrophage</tissue>
    </source>
</reference>
<reference key="2">
    <citation type="journal article" date="1994" name="Gene">
        <title>Sequence of the cDNA encoding murine CRK4 protein kinase.</title>
        <authorList>
            <person name="Stepanova L.Y."/>
            <person name="Ershler M."/>
            <person name="Belyavsky A.V."/>
        </authorList>
    </citation>
    <scope>NUCLEOTIDE SEQUENCE [MRNA]</scope>
    <source>
        <strain>CBA/J</strain>
        <tissue>Bone marrow</tissue>
    </source>
</reference>
<reference key="3">
    <citation type="journal article" date="2004" name="Genome Res.">
        <title>The status, quality, and expansion of the NIH full-length cDNA project: the Mammalian Gene Collection (MGC).</title>
        <authorList>
            <consortium name="The MGC Project Team"/>
        </authorList>
    </citation>
    <scope>NUCLEOTIDE SEQUENCE [LARGE SCALE MRNA]</scope>
    <source>
        <strain>C57BL/6J</strain>
        <tissue>Brain</tissue>
    </source>
</reference>
<reference key="4">
    <citation type="journal article" date="1992" name="Oncogene">
        <title>An Eph-related receptor protein tyrosine kinase gene segmentally expressed in the developing mouse hindbrain.</title>
        <authorList>
            <person name="Gilardi-Hebenstreit P."/>
            <person name="Nieto M.A."/>
            <person name="Frain M."/>
            <person name="Mattei M.-G."/>
            <person name="Chestier A."/>
            <person name="Wilkinson D.G."/>
            <person name="Charnay P."/>
        </authorList>
    </citation>
    <scope>NUCLEOTIDE SEQUENCE [MRNA] OF 139-154</scope>
    <source>
        <strain>C57BL/6J</strain>
        <tissue>Embryonic brain</tissue>
    </source>
</reference>
<reference key="5">
    <citation type="journal article" date="1993" name="Gene">
        <title>Novel CDC2-related protein kinases produced in murine hematopoietic stem cells.</title>
        <authorList>
            <person name="Ershler M.A."/>
            <person name="Nagorskaya T.V."/>
            <person name="Visser J.W.M."/>
            <person name="Belyavsky A.V."/>
        </authorList>
    </citation>
    <scope>NUCLEOTIDE SEQUENCE [MRNA] OF 141-176</scope>
    <source>
        <strain>CBA/J</strain>
        <tissue>Bone marrow</tissue>
    </source>
</reference>
<reference key="6">
    <citation type="journal article" date="1992" name="Dokl. Akad. Nauk SSSR">
        <title>Identification of new protein kinase genes, similar to kinases of the cdc2 family and expressed in murine hematopoietic stem cells.</title>
        <authorList>
            <person name="Ershler M.A."/>
            <person name="Nagorskaya T.V."/>
            <person name="Visser J.W.M."/>
            <person name="Belyavsky A.V."/>
        </authorList>
    </citation>
    <scope>NUCLEOTIDE SEQUENCE [MRNA] OF 141-176</scope>
    <source>
        <strain>CBA/J</strain>
        <tissue>Bone marrow</tissue>
    </source>
</reference>
<reference key="7">
    <citation type="journal article" date="2010" name="Cell">
        <title>A tissue-specific atlas of mouse protein phosphorylation and expression.</title>
        <authorList>
            <person name="Huttlin E.L."/>
            <person name="Jedrychowski M.P."/>
            <person name="Elias J.E."/>
            <person name="Goswami T."/>
            <person name="Rad R."/>
            <person name="Beausoleil S.A."/>
            <person name="Villen J."/>
            <person name="Haas W."/>
            <person name="Sowa M.E."/>
            <person name="Gygi S.P."/>
        </authorList>
    </citation>
    <scope>IDENTIFICATION BY MASS SPECTROMETRY [LARGE SCALE ANALYSIS]</scope>
    <source>
        <tissue>Lung</tissue>
        <tissue>Spleen</tissue>
        <tissue>Testis</tissue>
    </source>
</reference>
<organism>
    <name type="scientific">Mus musculus</name>
    <name type="common">Mouse</name>
    <dbReference type="NCBI Taxonomy" id="10090"/>
    <lineage>
        <taxon>Eukaryota</taxon>
        <taxon>Metazoa</taxon>
        <taxon>Chordata</taxon>
        <taxon>Craniata</taxon>
        <taxon>Vertebrata</taxon>
        <taxon>Euteleostomi</taxon>
        <taxon>Mammalia</taxon>
        <taxon>Eutheria</taxon>
        <taxon>Euarchontoglires</taxon>
        <taxon>Glires</taxon>
        <taxon>Rodentia</taxon>
        <taxon>Myomorpha</taxon>
        <taxon>Muroidea</taxon>
        <taxon>Muridae</taxon>
        <taxon>Murinae</taxon>
        <taxon>Mus</taxon>
        <taxon>Mus</taxon>
    </lineage>
</organism>
<accession>Q03147</accession>
<accession>Q99KK3</accession>
<dbReference type="EC" id="2.7.11.22"/>
<dbReference type="EC" id="2.7.11.23"/>
<dbReference type="EMBL" id="U11822">
    <property type="protein sequence ID" value="AAA64831.1"/>
    <property type="molecule type" value="mRNA"/>
</dbReference>
<dbReference type="EMBL" id="X74145">
    <property type="protein sequence ID" value="CAA52242.1"/>
    <property type="molecule type" value="mRNA"/>
</dbReference>
<dbReference type="EMBL" id="BC004605">
    <property type="protein sequence ID" value="AAH04605.1"/>
    <property type="molecule type" value="mRNA"/>
</dbReference>
<dbReference type="EMBL" id="BC068160">
    <property type="protein sequence ID" value="AAH68160.1"/>
    <property type="molecule type" value="mRNA"/>
</dbReference>
<dbReference type="EMBL" id="X57239">
    <property type="protein sequence ID" value="CAA40515.1"/>
    <property type="molecule type" value="mRNA"/>
</dbReference>
<dbReference type="EMBL" id="X65070">
    <property type="protein sequence ID" value="CAA46203.1"/>
    <property type="molecule type" value="mRNA"/>
</dbReference>
<dbReference type="CCDS" id="CCDS36766.1"/>
<dbReference type="PIR" id="A56231">
    <property type="entry name" value="A56231"/>
</dbReference>
<dbReference type="PIR" id="S30503">
    <property type="entry name" value="S30503"/>
</dbReference>
<dbReference type="PIR" id="S34652">
    <property type="entry name" value="S34652"/>
</dbReference>
<dbReference type="RefSeq" id="NP_034004.2">
    <property type="nucleotide sequence ID" value="NM_009874.4"/>
</dbReference>
<dbReference type="SMR" id="Q03147"/>
<dbReference type="BioGRID" id="198650">
    <property type="interactions" value="4"/>
</dbReference>
<dbReference type="ComplexPortal" id="CPX-3268">
    <property type="entry name" value="Cyclin-dependent protein kinase-activating kinase complex"/>
</dbReference>
<dbReference type="FunCoup" id="Q03147">
    <property type="interactions" value="3890"/>
</dbReference>
<dbReference type="IntAct" id="Q03147">
    <property type="interactions" value="1"/>
</dbReference>
<dbReference type="STRING" id="10090.ENSMUSP00000088845"/>
<dbReference type="ChEMBL" id="CHEMBL2176816"/>
<dbReference type="GlyGen" id="Q03147">
    <property type="glycosylation" value="1 site"/>
</dbReference>
<dbReference type="iPTMnet" id="Q03147"/>
<dbReference type="PhosphoSitePlus" id="Q03147"/>
<dbReference type="SwissPalm" id="Q03147"/>
<dbReference type="jPOST" id="Q03147"/>
<dbReference type="PaxDb" id="10090-ENSMUSP00000088845"/>
<dbReference type="PeptideAtlas" id="Q03147"/>
<dbReference type="ProteomicsDB" id="283772"/>
<dbReference type="Pumba" id="Q03147"/>
<dbReference type="Antibodypedia" id="1446">
    <property type="antibodies" value="821 antibodies from 45 providers"/>
</dbReference>
<dbReference type="DNASU" id="12572"/>
<dbReference type="Ensembl" id="ENSMUST00000091299.8">
    <property type="protein sequence ID" value="ENSMUSP00000088845.7"/>
    <property type="gene ID" value="ENSMUSG00000069089.9"/>
</dbReference>
<dbReference type="GeneID" id="12572"/>
<dbReference type="KEGG" id="mmu:12572"/>
<dbReference type="UCSC" id="uc007rrk.2">
    <property type="organism name" value="mouse"/>
</dbReference>
<dbReference type="AGR" id="MGI:102956"/>
<dbReference type="CTD" id="1022"/>
<dbReference type="MGI" id="MGI:102956">
    <property type="gene designation" value="Cdk7"/>
</dbReference>
<dbReference type="VEuPathDB" id="HostDB:ENSMUSG00000069089"/>
<dbReference type="eggNOG" id="KOG0659">
    <property type="taxonomic scope" value="Eukaryota"/>
</dbReference>
<dbReference type="GeneTree" id="ENSGT00940000155179"/>
<dbReference type="HOGENOM" id="CLU_000288_181_1_1"/>
<dbReference type="InParanoid" id="Q03147"/>
<dbReference type="OMA" id="GIHHCHR"/>
<dbReference type="OrthoDB" id="1732493at2759"/>
<dbReference type="PhylomeDB" id="Q03147"/>
<dbReference type="TreeFam" id="TF101024"/>
<dbReference type="BRENDA" id="2.7.11.22">
    <property type="organism ID" value="3474"/>
</dbReference>
<dbReference type="Reactome" id="R-MMU-112382">
    <property type="pathway name" value="Formation of RNA Pol II elongation complex"/>
</dbReference>
<dbReference type="Reactome" id="R-MMU-113418">
    <property type="pathway name" value="Formation of the Early Elongation Complex"/>
</dbReference>
<dbReference type="Reactome" id="R-MMU-5696395">
    <property type="pathway name" value="Formation of Incision Complex in GG-NER"/>
</dbReference>
<dbReference type="Reactome" id="R-MMU-674695">
    <property type="pathway name" value="RNA Polymerase II Pre-transcription Events"/>
</dbReference>
<dbReference type="Reactome" id="R-MMU-6781823">
    <property type="pathway name" value="Formation of TC-NER Pre-Incision Complex"/>
</dbReference>
<dbReference type="Reactome" id="R-MMU-6782135">
    <property type="pathway name" value="Dual incision in TC-NER"/>
</dbReference>
<dbReference type="Reactome" id="R-MMU-6782210">
    <property type="pathway name" value="Gap-filling DNA repair synthesis and ligation in TC-NER"/>
</dbReference>
<dbReference type="Reactome" id="R-MMU-6796648">
    <property type="pathway name" value="TP53 Regulates Transcription of DNA Repair Genes"/>
</dbReference>
<dbReference type="Reactome" id="R-MMU-6807505">
    <property type="pathway name" value="RNA polymerase II transcribes snRNA genes"/>
</dbReference>
<dbReference type="Reactome" id="R-MMU-69202">
    <property type="pathway name" value="Cyclin E associated events during G1/S transition"/>
</dbReference>
<dbReference type="Reactome" id="R-MMU-69231">
    <property type="pathway name" value="Cyclin D associated events in G1"/>
</dbReference>
<dbReference type="Reactome" id="R-MMU-69273">
    <property type="pathway name" value="Cyclin A/B1/B2 associated events during G2/M transition"/>
</dbReference>
<dbReference type="Reactome" id="R-MMU-69656">
    <property type="pathway name" value="Cyclin A:Cdk2-associated events at S phase entry"/>
</dbReference>
<dbReference type="Reactome" id="R-MMU-72086">
    <property type="pathway name" value="mRNA Capping"/>
</dbReference>
<dbReference type="Reactome" id="R-MMU-73762">
    <property type="pathway name" value="RNA Polymerase I Transcription Initiation"/>
</dbReference>
<dbReference type="Reactome" id="R-MMU-73772">
    <property type="pathway name" value="RNA Polymerase I Promoter Escape"/>
</dbReference>
<dbReference type="Reactome" id="R-MMU-73776">
    <property type="pathway name" value="RNA Polymerase II Promoter Escape"/>
</dbReference>
<dbReference type="Reactome" id="R-MMU-73779">
    <property type="pathway name" value="RNA Polymerase II Transcription Pre-Initiation And Promoter Opening"/>
</dbReference>
<dbReference type="Reactome" id="R-MMU-73863">
    <property type="pathway name" value="RNA Polymerase I Transcription Termination"/>
</dbReference>
<dbReference type="Reactome" id="R-MMU-75953">
    <property type="pathway name" value="RNA Polymerase II Transcription Initiation"/>
</dbReference>
<dbReference type="Reactome" id="R-MMU-75955">
    <property type="pathway name" value="RNA Polymerase II Transcription Elongation"/>
</dbReference>
<dbReference type="Reactome" id="R-MMU-76042">
    <property type="pathway name" value="RNA Polymerase II Transcription Initiation And Promoter Clearance"/>
</dbReference>
<dbReference type="Reactome" id="R-MMU-77075">
    <property type="pathway name" value="RNA Pol II CTD phosphorylation and interaction with CE"/>
</dbReference>
<dbReference type="Reactome" id="R-MMU-8939236">
    <property type="pathway name" value="RUNX1 regulates transcription of genes involved in differentiation of HSCs"/>
</dbReference>
<dbReference type="BioGRID-ORCS" id="12572">
    <property type="hits" value="25 hits in 113 CRISPR screens"/>
</dbReference>
<dbReference type="ChiTaRS" id="Cdk7">
    <property type="organism name" value="mouse"/>
</dbReference>
<dbReference type="PRO" id="PR:Q03147"/>
<dbReference type="Proteomes" id="UP000000589">
    <property type="component" value="Chromosome 13"/>
</dbReference>
<dbReference type="RNAct" id="Q03147">
    <property type="molecule type" value="protein"/>
</dbReference>
<dbReference type="Bgee" id="ENSMUSG00000069089">
    <property type="expression patterns" value="Expressed in placenta labyrinth and 249 other cell types or tissues"/>
</dbReference>
<dbReference type="ExpressionAtlas" id="Q03147">
    <property type="expression patterns" value="baseline and differential"/>
</dbReference>
<dbReference type="GO" id="GO:0070516">
    <property type="term" value="C:CAK-ERCC2 complex"/>
    <property type="evidence" value="ECO:0007669"/>
    <property type="project" value="Ensembl"/>
</dbReference>
<dbReference type="GO" id="GO:0000307">
    <property type="term" value="C:cyclin-dependent protein kinase holoenzyme complex"/>
    <property type="evidence" value="ECO:0000266"/>
    <property type="project" value="ComplexPortal"/>
</dbReference>
<dbReference type="GO" id="GO:0005829">
    <property type="term" value="C:cytosol"/>
    <property type="evidence" value="ECO:0007669"/>
    <property type="project" value="Ensembl"/>
</dbReference>
<dbReference type="GO" id="GO:0001650">
    <property type="term" value="C:fibrillar center"/>
    <property type="evidence" value="ECO:0007669"/>
    <property type="project" value="Ensembl"/>
</dbReference>
<dbReference type="GO" id="GO:0001673">
    <property type="term" value="C:male germ cell nucleus"/>
    <property type="evidence" value="ECO:0000314"/>
    <property type="project" value="MGI"/>
</dbReference>
<dbReference type="GO" id="GO:0005634">
    <property type="term" value="C:nucleus"/>
    <property type="evidence" value="ECO:0000266"/>
    <property type="project" value="MGI"/>
</dbReference>
<dbReference type="GO" id="GO:0048471">
    <property type="term" value="C:perinuclear region of cytoplasm"/>
    <property type="evidence" value="ECO:0007669"/>
    <property type="project" value="UniProtKB-SubCell"/>
</dbReference>
<dbReference type="GO" id="GO:0005886">
    <property type="term" value="C:plasma membrane"/>
    <property type="evidence" value="ECO:0007669"/>
    <property type="project" value="Ensembl"/>
</dbReference>
<dbReference type="GO" id="GO:0000439">
    <property type="term" value="C:transcription factor TFIIH core complex"/>
    <property type="evidence" value="ECO:0007669"/>
    <property type="project" value="Ensembl"/>
</dbReference>
<dbReference type="GO" id="GO:0005675">
    <property type="term" value="C:transcription factor TFIIH holo complex"/>
    <property type="evidence" value="ECO:0000250"/>
    <property type="project" value="UniProtKB"/>
</dbReference>
<dbReference type="GO" id="GO:0070985">
    <property type="term" value="C:transcription factor TFIIK complex"/>
    <property type="evidence" value="ECO:0007669"/>
    <property type="project" value="Ensembl"/>
</dbReference>
<dbReference type="GO" id="GO:0005524">
    <property type="term" value="F:ATP binding"/>
    <property type="evidence" value="ECO:0007669"/>
    <property type="project" value="UniProtKB-KW"/>
</dbReference>
<dbReference type="GO" id="GO:0008094">
    <property type="term" value="F:ATP-dependent activity, acting on DNA"/>
    <property type="evidence" value="ECO:0000250"/>
    <property type="project" value="UniProtKB"/>
</dbReference>
<dbReference type="GO" id="GO:0004693">
    <property type="term" value="F:cyclin-dependent protein serine/threonine kinase activity"/>
    <property type="evidence" value="ECO:0000250"/>
    <property type="project" value="MGI"/>
</dbReference>
<dbReference type="GO" id="GO:0016301">
    <property type="term" value="F:kinase activity"/>
    <property type="evidence" value="ECO:0000314"/>
    <property type="project" value="MGI"/>
</dbReference>
<dbReference type="GO" id="GO:0004672">
    <property type="term" value="F:protein kinase activity"/>
    <property type="evidence" value="ECO:0000314"/>
    <property type="project" value="MGI"/>
</dbReference>
<dbReference type="GO" id="GO:0106310">
    <property type="term" value="F:protein serine kinase activity"/>
    <property type="evidence" value="ECO:0007669"/>
    <property type="project" value="RHEA"/>
</dbReference>
<dbReference type="GO" id="GO:0008353">
    <property type="term" value="F:RNA polymerase II CTD heptapeptide repeat kinase activity"/>
    <property type="evidence" value="ECO:0000250"/>
    <property type="project" value="UniProtKB"/>
</dbReference>
<dbReference type="GO" id="GO:0140836">
    <property type="term" value="F:RNA polymerase II CTD heptapeptide repeat S5 kinase activity"/>
    <property type="evidence" value="ECO:0000250"/>
    <property type="project" value="UniProtKB"/>
</dbReference>
<dbReference type="GO" id="GO:0051301">
    <property type="term" value="P:cell division"/>
    <property type="evidence" value="ECO:0007669"/>
    <property type="project" value="UniProtKB-KW"/>
</dbReference>
<dbReference type="GO" id="GO:0006281">
    <property type="term" value="P:DNA repair"/>
    <property type="evidence" value="ECO:0007669"/>
    <property type="project" value="UniProtKB-KW"/>
</dbReference>
<dbReference type="GO" id="GO:0045944">
    <property type="term" value="P:positive regulation of transcription by RNA polymerase II"/>
    <property type="evidence" value="ECO:0000250"/>
    <property type="project" value="UniProtKB"/>
</dbReference>
<dbReference type="GO" id="GO:0050821">
    <property type="term" value="P:protein stabilization"/>
    <property type="evidence" value="ECO:0007669"/>
    <property type="project" value="Ensembl"/>
</dbReference>
<dbReference type="GO" id="GO:2000045">
    <property type="term" value="P:regulation of G1/S transition of mitotic cell cycle"/>
    <property type="evidence" value="ECO:0000266"/>
    <property type="project" value="ComplexPortal"/>
</dbReference>
<dbReference type="GO" id="GO:0006367">
    <property type="term" value="P:transcription initiation at RNA polymerase II promoter"/>
    <property type="evidence" value="ECO:0000250"/>
    <property type="project" value="UniProtKB"/>
</dbReference>
<dbReference type="CDD" id="cd07841">
    <property type="entry name" value="STKc_CDK7"/>
    <property type="match status" value="1"/>
</dbReference>
<dbReference type="FunFam" id="1.10.510.10:FF:000097">
    <property type="entry name" value="Putative cyclin-dependent kinase 7"/>
    <property type="match status" value="1"/>
</dbReference>
<dbReference type="FunFam" id="3.30.200.20:FF:000190">
    <property type="entry name" value="Putative cyclin-dependent kinase 7"/>
    <property type="match status" value="1"/>
</dbReference>
<dbReference type="Gene3D" id="3.30.200.20">
    <property type="entry name" value="Phosphorylase Kinase, domain 1"/>
    <property type="match status" value="1"/>
</dbReference>
<dbReference type="Gene3D" id="1.10.510.10">
    <property type="entry name" value="Transferase(Phosphotransferase) domain 1"/>
    <property type="match status" value="1"/>
</dbReference>
<dbReference type="InterPro" id="IPR050108">
    <property type="entry name" value="CDK"/>
</dbReference>
<dbReference type="InterPro" id="IPR037770">
    <property type="entry name" value="CDK7"/>
</dbReference>
<dbReference type="InterPro" id="IPR011009">
    <property type="entry name" value="Kinase-like_dom_sf"/>
</dbReference>
<dbReference type="InterPro" id="IPR000719">
    <property type="entry name" value="Prot_kinase_dom"/>
</dbReference>
<dbReference type="InterPro" id="IPR017441">
    <property type="entry name" value="Protein_kinase_ATP_BS"/>
</dbReference>
<dbReference type="InterPro" id="IPR008271">
    <property type="entry name" value="Ser/Thr_kinase_AS"/>
</dbReference>
<dbReference type="PANTHER" id="PTHR24056">
    <property type="entry name" value="CELL DIVISION PROTEIN KINASE"/>
    <property type="match status" value="1"/>
</dbReference>
<dbReference type="PANTHER" id="PTHR24056:SF0">
    <property type="entry name" value="CYCLIN-DEPENDENT KINASE 7"/>
    <property type="match status" value="1"/>
</dbReference>
<dbReference type="Pfam" id="PF00069">
    <property type="entry name" value="Pkinase"/>
    <property type="match status" value="1"/>
</dbReference>
<dbReference type="SMART" id="SM00220">
    <property type="entry name" value="S_TKc"/>
    <property type="match status" value="1"/>
</dbReference>
<dbReference type="SUPFAM" id="SSF56112">
    <property type="entry name" value="Protein kinase-like (PK-like)"/>
    <property type="match status" value="1"/>
</dbReference>
<dbReference type="PROSITE" id="PS00107">
    <property type="entry name" value="PROTEIN_KINASE_ATP"/>
    <property type="match status" value="1"/>
</dbReference>
<dbReference type="PROSITE" id="PS50011">
    <property type="entry name" value="PROTEIN_KINASE_DOM"/>
    <property type="match status" value="1"/>
</dbReference>
<dbReference type="PROSITE" id="PS00108">
    <property type="entry name" value="PROTEIN_KINASE_ST"/>
    <property type="match status" value="1"/>
</dbReference>